<reference key="1">
    <citation type="journal article" date="2008" name="BMC Genomics">
        <title>The genome sequence of the fish pathogen Aliivibrio salmonicida strain LFI1238 shows extensive evidence of gene decay.</title>
        <authorList>
            <person name="Hjerde E."/>
            <person name="Lorentzen M.S."/>
            <person name="Holden M.T."/>
            <person name="Seeger K."/>
            <person name="Paulsen S."/>
            <person name="Bason N."/>
            <person name="Churcher C."/>
            <person name="Harris D."/>
            <person name="Norbertczak H."/>
            <person name="Quail M.A."/>
            <person name="Sanders S."/>
            <person name="Thurston S."/>
            <person name="Parkhill J."/>
            <person name="Willassen N.P."/>
            <person name="Thomson N.R."/>
        </authorList>
    </citation>
    <scope>NUCLEOTIDE SEQUENCE [LARGE SCALE GENOMIC DNA]</scope>
    <source>
        <strain>LFI1238</strain>
    </source>
</reference>
<name>PANC_ALISL</name>
<accession>B6ELE2</accession>
<evidence type="ECO:0000255" key="1">
    <source>
        <dbReference type="HAMAP-Rule" id="MF_00158"/>
    </source>
</evidence>
<organism>
    <name type="scientific">Aliivibrio salmonicida (strain LFI1238)</name>
    <name type="common">Vibrio salmonicida (strain LFI1238)</name>
    <dbReference type="NCBI Taxonomy" id="316275"/>
    <lineage>
        <taxon>Bacteria</taxon>
        <taxon>Pseudomonadati</taxon>
        <taxon>Pseudomonadota</taxon>
        <taxon>Gammaproteobacteria</taxon>
        <taxon>Vibrionales</taxon>
        <taxon>Vibrionaceae</taxon>
        <taxon>Aliivibrio</taxon>
    </lineage>
</organism>
<dbReference type="EC" id="6.3.2.1" evidence="1"/>
<dbReference type="EMBL" id="FM178379">
    <property type="protein sequence ID" value="CAQ80294.1"/>
    <property type="molecule type" value="Genomic_DNA"/>
</dbReference>
<dbReference type="RefSeq" id="WP_012551072.1">
    <property type="nucleotide sequence ID" value="NC_011312.1"/>
</dbReference>
<dbReference type="SMR" id="B6ELE2"/>
<dbReference type="KEGG" id="vsa:VSAL_I2610"/>
<dbReference type="eggNOG" id="COG0414">
    <property type="taxonomic scope" value="Bacteria"/>
</dbReference>
<dbReference type="HOGENOM" id="CLU_047148_0_0_6"/>
<dbReference type="UniPathway" id="UPA00028">
    <property type="reaction ID" value="UER00005"/>
</dbReference>
<dbReference type="Proteomes" id="UP000001730">
    <property type="component" value="Chromosome 1"/>
</dbReference>
<dbReference type="GO" id="GO:0005829">
    <property type="term" value="C:cytosol"/>
    <property type="evidence" value="ECO:0007669"/>
    <property type="project" value="TreeGrafter"/>
</dbReference>
<dbReference type="GO" id="GO:0005524">
    <property type="term" value="F:ATP binding"/>
    <property type="evidence" value="ECO:0007669"/>
    <property type="project" value="UniProtKB-KW"/>
</dbReference>
<dbReference type="GO" id="GO:0004592">
    <property type="term" value="F:pantoate-beta-alanine ligase activity"/>
    <property type="evidence" value="ECO:0007669"/>
    <property type="project" value="UniProtKB-UniRule"/>
</dbReference>
<dbReference type="GO" id="GO:0015940">
    <property type="term" value="P:pantothenate biosynthetic process"/>
    <property type="evidence" value="ECO:0007669"/>
    <property type="project" value="UniProtKB-UniRule"/>
</dbReference>
<dbReference type="CDD" id="cd00560">
    <property type="entry name" value="PanC"/>
    <property type="match status" value="1"/>
</dbReference>
<dbReference type="FunFam" id="3.40.50.620:FF:000013">
    <property type="entry name" value="Pantothenate synthetase"/>
    <property type="match status" value="1"/>
</dbReference>
<dbReference type="Gene3D" id="3.40.50.620">
    <property type="entry name" value="HUPs"/>
    <property type="match status" value="1"/>
</dbReference>
<dbReference type="Gene3D" id="3.30.1300.10">
    <property type="entry name" value="Pantoate-beta-alanine ligase, C-terminal domain"/>
    <property type="match status" value="1"/>
</dbReference>
<dbReference type="HAMAP" id="MF_00158">
    <property type="entry name" value="PanC"/>
    <property type="match status" value="1"/>
</dbReference>
<dbReference type="InterPro" id="IPR004821">
    <property type="entry name" value="Cyt_trans-like"/>
</dbReference>
<dbReference type="InterPro" id="IPR003721">
    <property type="entry name" value="Pantoate_ligase"/>
</dbReference>
<dbReference type="InterPro" id="IPR042176">
    <property type="entry name" value="Pantoate_ligase_C"/>
</dbReference>
<dbReference type="InterPro" id="IPR014729">
    <property type="entry name" value="Rossmann-like_a/b/a_fold"/>
</dbReference>
<dbReference type="NCBIfam" id="TIGR00125">
    <property type="entry name" value="cyt_tran_rel"/>
    <property type="match status" value="1"/>
</dbReference>
<dbReference type="NCBIfam" id="TIGR00018">
    <property type="entry name" value="panC"/>
    <property type="match status" value="1"/>
</dbReference>
<dbReference type="PANTHER" id="PTHR21299">
    <property type="entry name" value="CYTIDYLATE KINASE/PANTOATE-BETA-ALANINE LIGASE"/>
    <property type="match status" value="1"/>
</dbReference>
<dbReference type="PANTHER" id="PTHR21299:SF1">
    <property type="entry name" value="PANTOATE--BETA-ALANINE LIGASE"/>
    <property type="match status" value="1"/>
</dbReference>
<dbReference type="Pfam" id="PF02569">
    <property type="entry name" value="Pantoate_ligase"/>
    <property type="match status" value="1"/>
</dbReference>
<dbReference type="SUPFAM" id="SSF52374">
    <property type="entry name" value="Nucleotidylyl transferase"/>
    <property type="match status" value="1"/>
</dbReference>
<feature type="chain" id="PRO_1000097027" description="Pantothenate synthetase">
    <location>
        <begin position="1"/>
        <end position="298"/>
    </location>
</feature>
<feature type="active site" description="Proton donor" evidence="1">
    <location>
        <position position="37"/>
    </location>
</feature>
<feature type="binding site" evidence="1">
    <location>
        <begin position="30"/>
        <end position="37"/>
    </location>
    <ligand>
        <name>ATP</name>
        <dbReference type="ChEBI" id="CHEBI:30616"/>
    </ligand>
</feature>
<feature type="binding site" evidence="1">
    <location>
        <position position="61"/>
    </location>
    <ligand>
        <name>(R)-pantoate</name>
        <dbReference type="ChEBI" id="CHEBI:15980"/>
    </ligand>
</feature>
<feature type="binding site" evidence="1">
    <location>
        <position position="61"/>
    </location>
    <ligand>
        <name>beta-alanine</name>
        <dbReference type="ChEBI" id="CHEBI:57966"/>
    </ligand>
</feature>
<feature type="binding site" evidence="1">
    <location>
        <begin position="149"/>
        <end position="152"/>
    </location>
    <ligand>
        <name>ATP</name>
        <dbReference type="ChEBI" id="CHEBI:30616"/>
    </ligand>
</feature>
<feature type="binding site" evidence="1">
    <location>
        <position position="155"/>
    </location>
    <ligand>
        <name>(R)-pantoate</name>
        <dbReference type="ChEBI" id="CHEBI:15980"/>
    </ligand>
</feature>
<feature type="binding site" evidence="1">
    <location>
        <position position="178"/>
    </location>
    <ligand>
        <name>ATP</name>
        <dbReference type="ChEBI" id="CHEBI:30616"/>
    </ligand>
</feature>
<feature type="binding site" evidence="1">
    <location>
        <begin position="186"/>
        <end position="189"/>
    </location>
    <ligand>
        <name>ATP</name>
        <dbReference type="ChEBI" id="CHEBI:30616"/>
    </ligand>
</feature>
<comment type="function">
    <text evidence="1">Catalyzes the condensation of pantoate with beta-alanine in an ATP-dependent reaction via a pantoyl-adenylate intermediate.</text>
</comment>
<comment type="catalytic activity">
    <reaction evidence="1">
        <text>(R)-pantoate + beta-alanine + ATP = (R)-pantothenate + AMP + diphosphate + H(+)</text>
        <dbReference type="Rhea" id="RHEA:10912"/>
        <dbReference type="ChEBI" id="CHEBI:15378"/>
        <dbReference type="ChEBI" id="CHEBI:15980"/>
        <dbReference type="ChEBI" id="CHEBI:29032"/>
        <dbReference type="ChEBI" id="CHEBI:30616"/>
        <dbReference type="ChEBI" id="CHEBI:33019"/>
        <dbReference type="ChEBI" id="CHEBI:57966"/>
        <dbReference type="ChEBI" id="CHEBI:456215"/>
        <dbReference type="EC" id="6.3.2.1"/>
    </reaction>
</comment>
<comment type="pathway">
    <text evidence="1">Cofactor biosynthesis; (R)-pantothenate biosynthesis; (R)-pantothenate from (R)-pantoate and beta-alanine: step 1/1.</text>
</comment>
<comment type="subunit">
    <text evidence="1">Homodimer.</text>
</comment>
<comment type="subcellular location">
    <subcellularLocation>
        <location evidence="1">Cytoplasm</location>
    </subcellularLocation>
</comment>
<comment type="miscellaneous">
    <text evidence="1">The reaction proceeds by a bi uni uni bi ping pong mechanism.</text>
</comment>
<comment type="similarity">
    <text evidence="1">Belongs to the pantothenate synthetase family.</text>
</comment>
<gene>
    <name evidence="1" type="primary">panC</name>
    <name type="ordered locus">VSAL_I2610</name>
</gene>
<keyword id="KW-0067">ATP-binding</keyword>
<keyword id="KW-0963">Cytoplasm</keyword>
<keyword id="KW-0436">Ligase</keyword>
<keyword id="KW-0547">Nucleotide-binding</keyword>
<keyword id="KW-0566">Pantothenate biosynthesis</keyword>
<proteinExistence type="inferred from homology"/>
<sequence length="298" mass="33789">MEIFADILPLREQIKTWKREGKRIAFIPTMGNLHEGHLTLVRTAREHADIIVASIFVNPMQFNNVDDLTNYPRTIDEDIEKLTSENVDMLFTPTPEVMYPDGLDKQTVVDVPVISTILEGASRPGHFKGVSTVVAKLFNIVQPDVACFGEKDFQQLALIRQMVIDMAMDIDVVGVATVREMDGLAMSSRNNLLTLNERQRSPVLARTMRWISSQMRRGRNDYESLIEDASDQLRAADLQPDEIFIRDARTLQEPTEETTQAVILMAAFLGQVRLIDNLVVELTTAANEEEEEEEEEEK</sequence>
<protein>
    <recommendedName>
        <fullName evidence="1">Pantothenate synthetase</fullName>
        <shortName evidence="1">PS</shortName>
        <ecNumber evidence="1">6.3.2.1</ecNumber>
    </recommendedName>
    <alternativeName>
        <fullName evidence="1">Pantoate--beta-alanine ligase</fullName>
    </alternativeName>
    <alternativeName>
        <fullName evidence="1">Pantoate-activating enzyme</fullName>
    </alternativeName>
</protein>